<reference key="1">
    <citation type="journal article" date="1996" name="J. Cell Sci.">
        <title>N-tropomodulin: a novel isoform of tropomodulin identified as the major binding protein to brain tropomyosin.</title>
        <authorList>
            <person name="Watakabe A."/>
            <person name="Kobayashi R."/>
            <person name="Helfman D.M."/>
        </authorList>
    </citation>
    <scope>NUCLEOTIDE SEQUENCE [MRNA]</scope>
    <source>
        <strain>Sprague-Dawley</strain>
        <tissue>Brain</tissue>
    </source>
</reference>
<reference key="2">
    <citation type="journal article" date="2023" name="Proc. Natl. Acad. Sci. U.S.A.">
        <title>A human FLII gene variant alters sarcomeric actin thin filament length and predisposes to cardiomyopathy.</title>
        <authorList>
            <person name="Kuwabara Y."/>
            <person name="York A.J."/>
            <person name="Lin S.C."/>
            <person name="Sargent M.A."/>
            <person name="Grimes K.M."/>
            <person name="Pirruccello J.P."/>
            <person name="Molkentin J.D."/>
        </authorList>
    </citation>
    <scope>INTERACTION WITH FLII</scope>
</reference>
<dbReference type="EMBL" id="U59241">
    <property type="protein sequence ID" value="AAC52855.1"/>
    <property type="molecule type" value="mRNA"/>
</dbReference>
<dbReference type="SMR" id="P70567"/>
<dbReference type="FunCoup" id="P70567">
    <property type="interactions" value="1298"/>
</dbReference>
<dbReference type="STRING" id="10116.ENSRNOP00000013228"/>
<dbReference type="iPTMnet" id="P70567"/>
<dbReference type="PhosphoSitePlus" id="P70567"/>
<dbReference type="PaxDb" id="10116-ENSRNOP00000013228"/>
<dbReference type="UCSC" id="RGD:3874">
    <property type="organism name" value="rat"/>
</dbReference>
<dbReference type="AGR" id="RGD:3874"/>
<dbReference type="RGD" id="3874">
    <property type="gene designation" value="Tmod1"/>
</dbReference>
<dbReference type="eggNOG" id="KOG3735">
    <property type="taxonomic scope" value="Eukaryota"/>
</dbReference>
<dbReference type="InParanoid" id="P70567"/>
<dbReference type="PhylomeDB" id="P70567"/>
<dbReference type="Reactome" id="R-RNO-390522">
    <property type="pathway name" value="Striated Muscle Contraction"/>
</dbReference>
<dbReference type="PRO" id="PR:P70567"/>
<dbReference type="Proteomes" id="UP000002494">
    <property type="component" value="Unplaced"/>
</dbReference>
<dbReference type="GO" id="GO:0005884">
    <property type="term" value="C:actin filament"/>
    <property type="evidence" value="ECO:0000250"/>
    <property type="project" value="UniProtKB"/>
</dbReference>
<dbReference type="GO" id="GO:0008180">
    <property type="term" value="C:COP9 signalosome"/>
    <property type="evidence" value="ECO:0000266"/>
    <property type="project" value="RGD"/>
</dbReference>
<dbReference type="GO" id="GO:0030863">
    <property type="term" value="C:cortical cytoskeleton"/>
    <property type="evidence" value="ECO:0000266"/>
    <property type="project" value="RGD"/>
</dbReference>
<dbReference type="GO" id="GO:0005856">
    <property type="term" value="C:cytoskeleton"/>
    <property type="evidence" value="ECO:0000318"/>
    <property type="project" value="GO_Central"/>
</dbReference>
<dbReference type="GO" id="GO:0016020">
    <property type="term" value="C:membrane"/>
    <property type="evidence" value="ECO:0000266"/>
    <property type="project" value="RGD"/>
</dbReference>
<dbReference type="GO" id="GO:0030016">
    <property type="term" value="C:myofibril"/>
    <property type="evidence" value="ECO:0000250"/>
    <property type="project" value="UniProtKB"/>
</dbReference>
<dbReference type="GO" id="GO:0030017">
    <property type="term" value="C:sarcomere"/>
    <property type="evidence" value="ECO:0000250"/>
    <property type="project" value="UniProtKB"/>
</dbReference>
<dbReference type="GO" id="GO:0005865">
    <property type="term" value="C:striated muscle thin filament"/>
    <property type="evidence" value="ECO:0000266"/>
    <property type="project" value="RGD"/>
</dbReference>
<dbReference type="GO" id="GO:0003779">
    <property type="term" value="F:actin binding"/>
    <property type="evidence" value="ECO:0000250"/>
    <property type="project" value="UniProtKB"/>
</dbReference>
<dbReference type="GO" id="GO:0005523">
    <property type="term" value="F:tropomyosin binding"/>
    <property type="evidence" value="ECO:0000314"/>
    <property type="project" value="RGD"/>
</dbReference>
<dbReference type="GO" id="GO:0007015">
    <property type="term" value="P:actin filament organization"/>
    <property type="evidence" value="ECO:0000318"/>
    <property type="project" value="GO_Central"/>
</dbReference>
<dbReference type="GO" id="GO:0008344">
    <property type="term" value="P:adult locomotory behavior"/>
    <property type="evidence" value="ECO:0000266"/>
    <property type="project" value="RGD"/>
</dbReference>
<dbReference type="GO" id="GO:0070307">
    <property type="term" value="P:lens fiber cell development"/>
    <property type="evidence" value="ECO:0000266"/>
    <property type="project" value="RGD"/>
</dbReference>
<dbReference type="GO" id="GO:0006936">
    <property type="term" value="P:muscle contraction"/>
    <property type="evidence" value="ECO:0000266"/>
    <property type="project" value="RGD"/>
</dbReference>
<dbReference type="GO" id="GO:0030239">
    <property type="term" value="P:myofibril assembly"/>
    <property type="evidence" value="ECO:0000266"/>
    <property type="project" value="RGD"/>
</dbReference>
<dbReference type="GO" id="GO:0051694">
    <property type="term" value="P:pointed-end actin filament capping"/>
    <property type="evidence" value="ECO:0007669"/>
    <property type="project" value="InterPro"/>
</dbReference>
<dbReference type="FunFam" id="3.80.10.10:FF:000006">
    <property type="entry name" value="Tropomodulin 2"/>
    <property type="match status" value="1"/>
</dbReference>
<dbReference type="Gene3D" id="3.80.10.10">
    <property type="entry name" value="Ribonuclease Inhibitor"/>
    <property type="match status" value="1"/>
</dbReference>
<dbReference type="InterPro" id="IPR032675">
    <property type="entry name" value="LRR_dom_sf"/>
</dbReference>
<dbReference type="InterPro" id="IPR004934">
    <property type="entry name" value="TMOD"/>
</dbReference>
<dbReference type="PANTHER" id="PTHR10901">
    <property type="entry name" value="TROPOMODULIN"/>
    <property type="match status" value="1"/>
</dbReference>
<dbReference type="PANTHER" id="PTHR10901:SF8">
    <property type="entry name" value="TROPOMODULIN-1"/>
    <property type="match status" value="1"/>
</dbReference>
<dbReference type="Pfam" id="PF03250">
    <property type="entry name" value="Tropomodulin"/>
    <property type="match status" value="1"/>
</dbReference>
<dbReference type="SUPFAM" id="SSF52047">
    <property type="entry name" value="RNI-like"/>
    <property type="match status" value="1"/>
</dbReference>
<keyword id="KW-0009">Actin-binding</keyword>
<keyword id="KW-0963">Cytoplasm</keyword>
<keyword id="KW-0206">Cytoskeleton</keyword>
<keyword id="KW-1185">Reference proteome</keyword>
<organism>
    <name type="scientific">Rattus norvegicus</name>
    <name type="common">Rat</name>
    <dbReference type="NCBI Taxonomy" id="10116"/>
    <lineage>
        <taxon>Eukaryota</taxon>
        <taxon>Metazoa</taxon>
        <taxon>Chordata</taxon>
        <taxon>Craniata</taxon>
        <taxon>Vertebrata</taxon>
        <taxon>Euteleostomi</taxon>
        <taxon>Mammalia</taxon>
        <taxon>Eutheria</taxon>
        <taxon>Euarchontoglires</taxon>
        <taxon>Glires</taxon>
        <taxon>Rodentia</taxon>
        <taxon>Myomorpha</taxon>
        <taxon>Muroidea</taxon>
        <taxon>Muridae</taxon>
        <taxon>Murinae</taxon>
        <taxon>Rattus</taxon>
    </lineage>
</organism>
<proteinExistence type="evidence at protein level"/>
<sequence length="359" mass="40480">MSYRRELEKYRDLDEDEILGALTEEELRTLENELDELDPDNALLPAGLRQKDQTTKAPTGPFKREELLDHLEKQAKEFKDREDLVPYTGEKRGKIWVPKQKPMDPVLESVTLEPELEEALANASDAELCDIAAILGMHTLMSNQQYYQALGSSSIVNKEGLNSVIKPTQYKPVPDEEPNPTDVEETLERIKNNDPELEEVNLNNIRNIPIPTLKAYAESLKENSYVKKFSIVGTRSNDPVAFALAEMLKVNKVLKTLNVESNFISGAGILCLVEALPHNTSLVELKIDNQSQPLGNKVEMEIVNMLEKNTTLLKFGYHFTQQGPRLRASNAMMNNNDLVRKRRLADLTGPIIPKCRSGV</sequence>
<evidence type="ECO:0000250" key="1"/>
<evidence type="ECO:0000250" key="2">
    <source>
        <dbReference type="UniProtKB" id="P28289"/>
    </source>
</evidence>
<evidence type="ECO:0000255" key="3"/>
<evidence type="ECO:0000256" key="4">
    <source>
        <dbReference type="SAM" id="MobiDB-lite"/>
    </source>
</evidence>
<evidence type="ECO:0000269" key="5">
    <source>
    </source>
</evidence>
<evidence type="ECO:0000305" key="6"/>
<comment type="function">
    <text evidence="1">Blocks the elongation and depolymerization of the actin filaments at the pointed end. The Tmod/TM complex contributes to the formation of the short actin protofilament, which in turn defines the geometry of the membrane skeleton (By similarity).</text>
</comment>
<comment type="subunit">
    <text evidence="5">Binds to the N-terminus of tropomyosin and to actin. Interacts with FLII (PubMed:37126682).</text>
</comment>
<comment type="subcellular location">
    <subcellularLocation>
        <location evidence="2">Cytoplasm</location>
        <location evidence="2">Cytoskeleton</location>
    </subcellularLocation>
    <text evidence="2">In myofibrils with sarcomeric structure, localizes to the pointed end of actin thin filaments.</text>
</comment>
<comment type="similarity">
    <text evidence="6">Belongs to the tropomodulin family.</text>
</comment>
<protein>
    <recommendedName>
        <fullName>Tropomodulin-1</fullName>
    </recommendedName>
    <alternativeName>
        <fullName>Erythrocyte tropomodulin</fullName>
        <shortName>E-Tmod</shortName>
    </alternativeName>
</protein>
<name>TMOD1_RAT</name>
<gene>
    <name type="primary">Tmod1</name>
    <name type="synonym">Tmod</name>
</gene>
<accession>P70567</accession>
<feature type="chain" id="PRO_0000186130" description="Tropomodulin-1">
    <location>
        <begin position="1"/>
        <end position="359"/>
    </location>
</feature>
<feature type="region of interest" description="Disordered" evidence="4">
    <location>
        <begin position="36"/>
        <end position="61"/>
    </location>
</feature>
<feature type="region of interest" description="Tropomyosin-binding" evidence="3">
    <location>
        <begin position="39"/>
        <end position="138"/>
    </location>
</feature>